<accession>Q9Y824</accession>
<accession>Q9C0V3</accession>
<evidence type="ECO:0000256" key="1">
    <source>
        <dbReference type="SAM" id="MobiDB-lite"/>
    </source>
</evidence>
<evidence type="ECO:0000269" key="2">
    <source>
    </source>
</evidence>
<protein>
    <recommendedName>
        <fullName>Uncharacterized protein C1105.01</fullName>
    </recommendedName>
</protein>
<name>YON1_SCHPO</name>
<gene>
    <name type="ORF">SPBC1105.01</name>
    <name type="ORF">SPBP7E8.03</name>
</gene>
<keyword id="KW-0597">Phosphoprotein</keyword>
<keyword id="KW-1185">Reference proteome</keyword>
<reference key="1">
    <citation type="journal article" date="2002" name="Nature">
        <title>The genome sequence of Schizosaccharomyces pombe.</title>
        <authorList>
            <person name="Wood V."/>
            <person name="Gwilliam R."/>
            <person name="Rajandream M.A."/>
            <person name="Lyne M.H."/>
            <person name="Lyne R."/>
            <person name="Stewart A."/>
            <person name="Sgouros J.G."/>
            <person name="Peat N."/>
            <person name="Hayles J."/>
            <person name="Baker S.G."/>
            <person name="Basham D."/>
            <person name="Bowman S."/>
            <person name="Brooks K."/>
            <person name="Brown D."/>
            <person name="Brown S."/>
            <person name="Chillingworth T."/>
            <person name="Churcher C.M."/>
            <person name="Collins M."/>
            <person name="Connor R."/>
            <person name="Cronin A."/>
            <person name="Davis P."/>
            <person name="Feltwell T."/>
            <person name="Fraser A."/>
            <person name="Gentles S."/>
            <person name="Goble A."/>
            <person name="Hamlin N."/>
            <person name="Harris D.E."/>
            <person name="Hidalgo J."/>
            <person name="Hodgson G."/>
            <person name="Holroyd S."/>
            <person name="Hornsby T."/>
            <person name="Howarth S."/>
            <person name="Huckle E.J."/>
            <person name="Hunt S."/>
            <person name="Jagels K."/>
            <person name="James K.D."/>
            <person name="Jones L."/>
            <person name="Jones M."/>
            <person name="Leather S."/>
            <person name="McDonald S."/>
            <person name="McLean J."/>
            <person name="Mooney P."/>
            <person name="Moule S."/>
            <person name="Mungall K.L."/>
            <person name="Murphy L.D."/>
            <person name="Niblett D."/>
            <person name="Odell C."/>
            <person name="Oliver K."/>
            <person name="O'Neil S."/>
            <person name="Pearson D."/>
            <person name="Quail M.A."/>
            <person name="Rabbinowitsch E."/>
            <person name="Rutherford K.M."/>
            <person name="Rutter S."/>
            <person name="Saunders D."/>
            <person name="Seeger K."/>
            <person name="Sharp S."/>
            <person name="Skelton J."/>
            <person name="Simmonds M.N."/>
            <person name="Squares R."/>
            <person name="Squares S."/>
            <person name="Stevens K."/>
            <person name="Taylor K."/>
            <person name="Taylor R.G."/>
            <person name="Tivey A."/>
            <person name="Walsh S.V."/>
            <person name="Warren T."/>
            <person name="Whitehead S."/>
            <person name="Woodward J.R."/>
            <person name="Volckaert G."/>
            <person name="Aert R."/>
            <person name="Robben J."/>
            <person name="Grymonprez B."/>
            <person name="Weltjens I."/>
            <person name="Vanstreels E."/>
            <person name="Rieger M."/>
            <person name="Schaefer M."/>
            <person name="Mueller-Auer S."/>
            <person name="Gabel C."/>
            <person name="Fuchs M."/>
            <person name="Duesterhoeft A."/>
            <person name="Fritzc C."/>
            <person name="Holzer E."/>
            <person name="Moestl D."/>
            <person name="Hilbert H."/>
            <person name="Borzym K."/>
            <person name="Langer I."/>
            <person name="Beck A."/>
            <person name="Lehrach H."/>
            <person name="Reinhardt R."/>
            <person name="Pohl T.M."/>
            <person name="Eger P."/>
            <person name="Zimmermann W."/>
            <person name="Wedler H."/>
            <person name="Wambutt R."/>
            <person name="Purnelle B."/>
            <person name="Goffeau A."/>
            <person name="Cadieu E."/>
            <person name="Dreano S."/>
            <person name="Gloux S."/>
            <person name="Lelaure V."/>
            <person name="Mottier S."/>
            <person name="Galibert F."/>
            <person name="Aves S.J."/>
            <person name="Xiang Z."/>
            <person name="Hunt C."/>
            <person name="Moore K."/>
            <person name="Hurst S.M."/>
            <person name="Lucas M."/>
            <person name="Rochet M."/>
            <person name="Gaillardin C."/>
            <person name="Tallada V.A."/>
            <person name="Garzon A."/>
            <person name="Thode G."/>
            <person name="Daga R.R."/>
            <person name="Cruzado L."/>
            <person name="Jimenez J."/>
            <person name="Sanchez M."/>
            <person name="del Rey F."/>
            <person name="Benito J."/>
            <person name="Dominguez A."/>
            <person name="Revuelta J.L."/>
            <person name="Moreno S."/>
            <person name="Armstrong J."/>
            <person name="Forsburg S.L."/>
            <person name="Cerutti L."/>
            <person name="Lowe T."/>
            <person name="McCombie W.R."/>
            <person name="Paulsen I."/>
            <person name="Potashkin J."/>
            <person name="Shpakovski G.V."/>
            <person name="Ussery D."/>
            <person name="Barrell B.G."/>
            <person name="Nurse P."/>
        </authorList>
    </citation>
    <scope>NUCLEOTIDE SEQUENCE [LARGE SCALE GENOMIC DNA]</scope>
    <source>
        <strain>972 / ATCC 24843</strain>
    </source>
</reference>
<reference key="2">
    <citation type="journal article" date="2008" name="J. Proteome Res.">
        <title>Phosphoproteome analysis of fission yeast.</title>
        <authorList>
            <person name="Wilson-Grady J.T."/>
            <person name="Villen J."/>
            <person name="Gygi S.P."/>
        </authorList>
    </citation>
    <scope>PHOSPHORYLATION [LARGE SCALE ANALYSIS] AT SER-948 AND SER-950</scope>
    <scope>IDENTIFICATION BY MASS SPECTROMETRY</scope>
</reference>
<sequence length="1001" mass="112871">MPKTDACERMLQSIRSHKNSKLENQRLPAILLHSIDNYIDSKSLQRTASVYFSALLALIKQSNGFDYSSIYILSIVMPATPSDEKLLHIDLLYTQIVPYLQKNNDDAPTIRCALNCTQEFLLSFSNESKELYLKAVDVVMPLLVKFSVDLRPKVRKISIQVLQTLKQKYDGLLPHLYPAIFDELQRSLSEVSNMDNPSFSKGLHTLHLLECLVDINQASGSDLGIICNALSRILTSNIPTSEPIFEMSIKLILKVLSERIDALSDAVIYELCDSLIPYWYRALSVTLLLYDNFVNRNPSRGIKGIQTLLEKILDFCISPLQSSESDVEYDGATSSDILNSLKFLRNKFTMKFVNKKNWATVLSNGIKKVIKTITASSRHANYAKALPRCSVYLQLLLGAIPEDQISELLPAFSVVARAIIKNKLVETPECLDLFKIFIQKLASPTFLECLGFADNFCNIQKSHWLPEVFRDNITGETPETFFDCFLPTIEAGNSQWWELLPLYTKAGCITNNLNENTLKKLASAIYNDRSCHSHVAQAFVDLTKIENVRQLISSNSSNLIGVLGNTLATMKNDDSNAEDLVMAATSIFSVAGDQQLQIITNLCESAPLSEPSLGSTGVIKLFPALLSISPADTWKPFLPHLVKLFDIAIPSNLSQSLSVLNFGPGLAYRLLQATLSNERMISAIVPVISRLYDSMNSVGDGSQALPKYVALERLKTWKLLFKLLPNDEFHLLPSAIAEVVLFSKHHDDDLRAMAFELLVEVGNRMKNGGKINMSLIDGEEPNKTVVEANINEYISMISANLMNDSLNLKVSTIFALTRIFYEFSDYIDDDYVNAVLEEVQSSLQSNNQEIARAAVGFIKMYITSFTKSKVLFHLDTLLPLILRWIKEHNAYVKLKAKQLLDRMLRVFSLKELEAFAENETDKEWLQRIWRVRRSRGDKKVVDNKRDASDSEDLAIKNPMNKKAKVGKVDFRKHEKKLNKASMHRDKFSTGMHTSKRVQKKN</sequence>
<dbReference type="EMBL" id="CU329671">
    <property type="protein sequence ID" value="CAC36933.2"/>
    <property type="molecule type" value="Genomic_DNA"/>
</dbReference>
<dbReference type="PIR" id="T39278">
    <property type="entry name" value="T39278"/>
</dbReference>
<dbReference type="RefSeq" id="NP_596456.2">
    <property type="nucleotide sequence ID" value="NM_001022375.3"/>
</dbReference>
<dbReference type="SMR" id="Q9Y824"/>
<dbReference type="BioGRID" id="280413">
    <property type="interactions" value="3"/>
</dbReference>
<dbReference type="FunCoup" id="Q9Y824">
    <property type="interactions" value="270"/>
</dbReference>
<dbReference type="STRING" id="284812.Q9Y824"/>
<dbReference type="iPTMnet" id="Q9Y824"/>
<dbReference type="PaxDb" id="4896-SPBC1105.01.1"/>
<dbReference type="EnsemblFungi" id="SPBC1105.01.1">
    <property type="protein sequence ID" value="SPBC1105.01.1:pep"/>
    <property type="gene ID" value="SPBC1105.01"/>
</dbReference>
<dbReference type="KEGG" id="spo:3361337"/>
<dbReference type="PomBase" id="SPBC1105.01"/>
<dbReference type="VEuPathDB" id="FungiDB:SPBC1105.01"/>
<dbReference type="eggNOG" id="KOG1248">
    <property type="taxonomic scope" value="Eukaryota"/>
</dbReference>
<dbReference type="HOGENOM" id="CLU_299602_0_0_1"/>
<dbReference type="InParanoid" id="Q9Y824"/>
<dbReference type="OMA" id="WKPFLPH"/>
<dbReference type="PhylomeDB" id="Q9Y824"/>
<dbReference type="Reactome" id="R-SPO-6798695">
    <property type="pathway name" value="Neutrophil degranulation"/>
</dbReference>
<dbReference type="Reactome" id="R-SPO-8951664">
    <property type="pathway name" value="Neddylation"/>
</dbReference>
<dbReference type="Reactome" id="R-SPO-917937">
    <property type="pathway name" value="Iron uptake and transport"/>
</dbReference>
<dbReference type="PRO" id="PR:Q9Y824"/>
<dbReference type="Proteomes" id="UP000002485">
    <property type="component" value="Chromosome II"/>
</dbReference>
<dbReference type="GO" id="GO:0005634">
    <property type="term" value="C:nucleus"/>
    <property type="evidence" value="ECO:0007005"/>
    <property type="project" value="PomBase"/>
</dbReference>
<dbReference type="GO" id="GO:0030490">
    <property type="term" value="P:maturation of SSU-rRNA"/>
    <property type="evidence" value="ECO:0000266"/>
    <property type="project" value="PomBase"/>
</dbReference>
<dbReference type="Gene3D" id="1.25.10.10">
    <property type="entry name" value="Leucine-rich Repeat Variant"/>
    <property type="match status" value="1"/>
</dbReference>
<dbReference type="InterPro" id="IPR011989">
    <property type="entry name" value="ARM-like"/>
</dbReference>
<dbReference type="InterPro" id="IPR016024">
    <property type="entry name" value="ARM-type_fold"/>
</dbReference>
<dbReference type="InterPro" id="IPR052087">
    <property type="entry name" value="RRP12"/>
</dbReference>
<dbReference type="PANTHER" id="PTHR48287">
    <property type="entry name" value="ARM REPEAT SUPERFAMILY PROTEIN"/>
    <property type="match status" value="1"/>
</dbReference>
<dbReference type="PANTHER" id="PTHR48287:SF1">
    <property type="entry name" value="ARM REPEAT SUPERFAMILY PROTEIN"/>
    <property type="match status" value="1"/>
</dbReference>
<dbReference type="SUPFAM" id="SSF48371">
    <property type="entry name" value="ARM repeat"/>
    <property type="match status" value="1"/>
</dbReference>
<feature type="chain" id="PRO_0000116874" description="Uncharacterized protein C1105.01">
    <location>
        <begin position="1"/>
        <end position="1001"/>
    </location>
</feature>
<feature type="region of interest" description="Disordered" evidence="1">
    <location>
        <begin position="939"/>
        <end position="1001"/>
    </location>
</feature>
<feature type="compositionally biased region" description="Basic and acidic residues" evidence="1">
    <location>
        <begin position="939"/>
        <end position="948"/>
    </location>
</feature>
<feature type="modified residue" description="Phosphoserine" evidence="2">
    <location>
        <position position="948"/>
    </location>
</feature>
<feature type="modified residue" description="Phosphoserine" evidence="2">
    <location>
        <position position="950"/>
    </location>
</feature>
<organism>
    <name type="scientific">Schizosaccharomyces pombe (strain 972 / ATCC 24843)</name>
    <name type="common">Fission yeast</name>
    <dbReference type="NCBI Taxonomy" id="284812"/>
    <lineage>
        <taxon>Eukaryota</taxon>
        <taxon>Fungi</taxon>
        <taxon>Dikarya</taxon>
        <taxon>Ascomycota</taxon>
        <taxon>Taphrinomycotina</taxon>
        <taxon>Schizosaccharomycetes</taxon>
        <taxon>Schizosaccharomycetales</taxon>
        <taxon>Schizosaccharomycetaceae</taxon>
        <taxon>Schizosaccharomyces</taxon>
    </lineage>
</organism>
<proteinExistence type="evidence at protein level"/>